<evidence type="ECO:0000255" key="1">
    <source>
        <dbReference type="HAMAP-Rule" id="MF_00595"/>
    </source>
</evidence>
<gene>
    <name evidence="1" type="primary">ppc</name>
    <name type="ordered locus">MAP_1169</name>
</gene>
<feature type="chain" id="PRO_0000166601" description="Phosphoenolpyruvate carboxylase">
    <location>
        <begin position="1"/>
        <end position="935"/>
    </location>
</feature>
<feature type="active site" evidence="1">
    <location>
        <position position="161"/>
    </location>
</feature>
<feature type="active site" evidence="1">
    <location>
        <position position="593"/>
    </location>
</feature>
<proteinExistence type="inferred from homology"/>
<accession>P61449</accession>
<protein>
    <recommendedName>
        <fullName evidence="1">Phosphoenolpyruvate carboxylase</fullName>
        <shortName evidence="1">PEPC</shortName>
        <shortName evidence="1">PEPCase</shortName>
        <ecNumber evidence="1">4.1.1.31</ecNumber>
    </recommendedName>
</protein>
<reference key="1">
    <citation type="journal article" date="2005" name="Proc. Natl. Acad. Sci. U.S.A.">
        <title>The complete genome sequence of Mycobacterium avium subspecies paratuberculosis.</title>
        <authorList>
            <person name="Li L."/>
            <person name="Bannantine J.P."/>
            <person name="Zhang Q."/>
            <person name="Amonsin A."/>
            <person name="May B.J."/>
            <person name="Alt D."/>
            <person name="Banerji N."/>
            <person name="Kanjilal S."/>
            <person name="Kapur V."/>
        </authorList>
    </citation>
    <scope>NUCLEOTIDE SEQUENCE [LARGE SCALE GENOMIC DNA]</scope>
    <source>
        <strain>ATCC BAA-968 / K-10</strain>
    </source>
</reference>
<dbReference type="EC" id="4.1.1.31" evidence="1"/>
<dbReference type="EMBL" id="AE016958">
    <property type="protein sequence ID" value="AAS03486.1"/>
    <property type="molecule type" value="Genomic_DNA"/>
</dbReference>
<dbReference type="RefSeq" id="WP_003877648.1">
    <property type="nucleotide sequence ID" value="NZ_CP106873.1"/>
</dbReference>
<dbReference type="SMR" id="P61449"/>
<dbReference type="STRING" id="262316.MAP_1169"/>
<dbReference type="KEGG" id="mpa:MAP_1169"/>
<dbReference type="PATRIC" id="fig|262316.17.peg.1230"/>
<dbReference type="eggNOG" id="COG2352">
    <property type="taxonomic scope" value="Bacteria"/>
</dbReference>
<dbReference type="HOGENOM" id="CLU_006557_2_0_11"/>
<dbReference type="Proteomes" id="UP000000580">
    <property type="component" value="Chromosome"/>
</dbReference>
<dbReference type="GO" id="GO:0005829">
    <property type="term" value="C:cytosol"/>
    <property type="evidence" value="ECO:0007669"/>
    <property type="project" value="TreeGrafter"/>
</dbReference>
<dbReference type="GO" id="GO:0000287">
    <property type="term" value="F:magnesium ion binding"/>
    <property type="evidence" value="ECO:0007669"/>
    <property type="project" value="UniProtKB-UniRule"/>
</dbReference>
<dbReference type="GO" id="GO:0008964">
    <property type="term" value="F:phosphoenolpyruvate carboxylase activity"/>
    <property type="evidence" value="ECO:0007669"/>
    <property type="project" value="UniProtKB-UniRule"/>
</dbReference>
<dbReference type="GO" id="GO:0015977">
    <property type="term" value="P:carbon fixation"/>
    <property type="evidence" value="ECO:0007669"/>
    <property type="project" value="UniProtKB-UniRule"/>
</dbReference>
<dbReference type="GO" id="GO:0006107">
    <property type="term" value="P:oxaloacetate metabolic process"/>
    <property type="evidence" value="ECO:0007669"/>
    <property type="project" value="UniProtKB-UniRule"/>
</dbReference>
<dbReference type="GO" id="GO:0006099">
    <property type="term" value="P:tricarboxylic acid cycle"/>
    <property type="evidence" value="ECO:0007669"/>
    <property type="project" value="InterPro"/>
</dbReference>
<dbReference type="Gene3D" id="1.20.1440.90">
    <property type="entry name" value="Phosphoenolpyruvate/pyruvate domain"/>
    <property type="match status" value="1"/>
</dbReference>
<dbReference type="HAMAP" id="MF_00595">
    <property type="entry name" value="PEPcase_type1"/>
    <property type="match status" value="1"/>
</dbReference>
<dbReference type="InterPro" id="IPR021135">
    <property type="entry name" value="PEP_COase"/>
</dbReference>
<dbReference type="InterPro" id="IPR022805">
    <property type="entry name" value="PEP_COase_bac/pln-type"/>
</dbReference>
<dbReference type="InterPro" id="IPR018129">
    <property type="entry name" value="PEP_COase_Lys_AS"/>
</dbReference>
<dbReference type="InterPro" id="IPR033129">
    <property type="entry name" value="PEPCASE_His_AS"/>
</dbReference>
<dbReference type="InterPro" id="IPR015813">
    <property type="entry name" value="Pyrv/PenolPyrv_kinase-like_dom"/>
</dbReference>
<dbReference type="NCBIfam" id="NF000584">
    <property type="entry name" value="PRK00009.1"/>
    <property type="match status" value="1"/>
</dbReference>
<dbReference type="PANTHER" id="PTHR30523">
    <property type="entry name" value="PHOSPHOENOLPYRUVATE CARBOXYLASE"/>
    <property type="match status" value="1"/>
</dbReference>
<dbReference type="PANTHER" id="PTHR30523:SF6">
    <property type="entry name" value="PHOSPHOENOLPYRUVATE CARBOXYLASE"/>
    <property type="match status" value="1"/>
</dbReference>
<dbReference type="Pfam" id="PF00311">
    <property type="entry name" value="PEPcase"/>
    <property type="match status" value="1"/>
</dbReference>
<dbReference type="PRINTS" id="PR00150">
    <property type="entry name" value="PEPCARBXLASE"/>
</dbReference>
<dbReference type="SUPFAM" id="SSF51621">
    <property type="entry name" value="Phosphoenolpyruvate/pyruvate domain"/>
    <property type="match status" value="1"/>
</dbReference>
<dbReference type="PROSITE" id="PS00781">
    <property type="entry name" value="PEPCASE_1"/>
    <property type="match status" value="1"/>
</dbReference>
<dbReference type="PROSITE" id="PS00393">
    <property type="entry name" value="PEPCASE_2"/>
    <property type="match status" value="1"/>
</dbReference>
<name>CAPP_MYCPA</name>
<sequence length="935" mass="102599">MVEASEGTLEPIGAVQRTLVGREATEPMRADIRLLGAILGDTVREQNGQQVFELVERARVESFRVRRSEIDRAELARMFAGIDIHQAIPVIRAFSHFALLANVAEDIHRERRRAIHVAAGEPPQDSSLAATYAKLDRAQLDSAMVAEALRGAVVSPVITAHPTETRRRTVFVTQHRITELMRLHAEGHTETDDGRNIELELRRQVLTLWQTALIRLSRLQITDEIEVGLRYYAAAFFKVIPQVNAEVRNALRARWPGADLLDEPIVAPGSWIGGDRDGNPNVTADVVRRATGDAAYTALAHYLAELTACEQELSMSARLVAVTPELAALAEDCAEKARADEPYRRALRVIRGRLTATAAEILDRRPQHELDLGLPPYATPAELRADLDTVDASLRAHGSALLADDRLALLREGVRVFGFHLCGLDMRQNSDVHEEVVAELLAWAGVHPDYRSLPEDERVELLAAELGTRRPLVGDRAELSELADKELGVVRAAAHAIRRYGPAAVPNYVISMCRSVSDVLEAAILLKEAGLIDASGPEPYCPVGISPLLETIEDLHNGAAILHAMLELPLYRALVAARGQSQEVMLGYSDSNKDGGYLASSWAVYRAELALVEVARKIGIRLRLFHGRGGTVGRGGGPSYEAILAQPPGAVNGSLRLTEQGEVIAAKYAEPQVAQRNLESLVAATLESTLLDVEGLGDTAEPAYAVLDEVAVLAQRAYAELVHETPGFVDYFMASTPVSEIGSLNIGSRPTSRKPTESIADLRAIPWVLAWSQSRVMLPGWYGTGSAFEQWIAAGPQSRAERVDILHDLYRRWPFFRSVLSNLAQVLAKSDLGLAAQYAELVDDAALRRRVFGKIADEHRRTIAMHKLITGQDNLLADNPALARSVFNRFPYLEPLNHLQVELLRRYRSGDDDELVQRGILLTMNGLASALRNSG</sequence>
<keyword id="KW-0120">Carbon dioxide fixation</keyword>
<keyword id="KW-0456">Lyase</keyword>
<keyword id="KW-0460">Magnesium</keyword>
<keyword id="KW-1185">Reference proteome</keyword>
<comment type="function">
    <text evidence="1">Forms oxaloacetate, a four-carbon dicarboxylic acid source for the tricarboxylic acid cycle.</text>
</comment>
<comment type="catalytic activity">
    <reaction evidence="1">
        <text>oxaloacetate + phosphate = phosphoenolpyruvate + hydrogencarbonate</text>
        <dbReference type="Rhea" id="RHEA:28370"/>
        <dbReference type="ChEBI" id="CHEBI:16452"/>
        <dbReference type="ChEBI" id="CHEBI:17544"/>
        <dbReference type="ChEBI" id="CHEBI:43474"/>
        <dbReference type="ChEBI" id="CHEBI:58702"/>
        <dbReference type="EC" id="4.1.1.31"/>
    </reaction>
</comment>
<comment type="cofactor">
    <cofactor evidence="1">
        <name>Mg(2+)</name>
        <dbReference type="ChEBI" id="CHEBI:18420"/>
    </cofactor>
</comment>
<comment type="similarity">
    <text evidence="1">Belongs to the PEPCase type 1 family.</text>
</comment>
<organism>
    <name type="scientific">Mycolicibacterium paratuberculosis (strain ATCC BAA-968 / K-10)</name>
    <name type="common">Mycobacterium paratuberculosis</name>
    <dbReference type="NCBI Taxonomy" id="262316"/>
    <lineage>
        <taxon>Bacteria</taxon>
        <taxon>Bacillati</taxon>
        <taxon>Actinomycetota</taxon>
        <taxon>Actinomycetes</taxon>
        <taxon>Mycobacteriales</taxon>
        <taxon>Mycobacteriaceae</taxon>
        <taxon>Mycobacterium</taxon>
        <taxon>Mycobacterium avium complex (MAC)</taxon>
    </lineage>
</organism>